<comment type="function">
    <text evidence="1">Essential for recycling GMP and indirectly, cGMP.</text>
</comment>
<comment type="catalytic activity">
    <reaction evidence="1">
        <text>GMP + ATP = GDP + ADP</text>
        <dbReference type="Rhea" id="RHEA:20780"/>
        <dbReference type="ChEBI" id="CHEBI:30616"/>
        <dbReference type="ChEBI" id="CHEBI:58115"/>
        <dbReference type="ChEBI" id="CHEBI:58189"/>
        <dbReference type="ChEBI" id="CHEBI:456216"/>
        <dbReference type="EC" id="2.7.4.8"/>
    </reaction>
</comment>
<comment type="subcellular location">
    <subcellularLocation>
        <location evidence="1">Cytoplasm</location>
    </subcellularLocation>
</comment>
<comment type="similarity">
    <text evidence="1">Belongs to the guanylate kinase family.</text>
</comment>
<proteinExistence type="inferred from homology"/>
<sequence>MMQVLSIQNCATTKENPLSGKLIILTGPSGVGKGTLMRSLLQRHPELYYSVSATTRPPRPGEVNGESYYFVSRSKFEELIAQGEFLESAEFAGNYYGTPREAVLNQVQSGKLVVLEIELAGARQIRTSFPEALSIFILPPSFEELENRIRGRGQDSEEAIARRLQRAKEEIQAADEFDIQIVNDDFEAALQAIEVALFG</sequence>
<reference key="1">
    <citation type="journal article" date="2001" name="DNA Res.">
        <title>Complete genomic sequence of the filamentous nitrogen-fixing cyanobacterium Anabaena sp. strain PCC 7120.</title>
        <authorList>
            <person name="Kaneko T."/>
            <person name="Nakamura Y."/>
            <person name="Wolk C.P."/>
            <person name="Kuritz T."/>
            <person name="Sasamoto S."/>
            <person name="Watanabe A."/>
            <person name="Iriguchi M."/>
            <person name="Ishikawa A."/>
            <person name="Kawashima K."/>
            <person name="Kimura T."/>
            <person name="Kishida Y."/>
            <person name="Kohara M."/>
            <person name="Matsumoto M."/>
            <person name="Matsuno A."/>
            <person name="Muraki A."/>
            <person name="Nakazaki N."/>
            <person name="Shimpo S."/>
            <person name="Sugimoto M."/>
            <person name="Takazawa M."/>
            <person name="Yamada M."/>
            <person name="Yasuda M."/>
            <person name="Tabata S."/>
        </authorList>
    </citation>
    <scope>NUCLEOTIDE SEQUENCE [LARGE SCALE GENOMIC DNA]</scope>
    <source>
        <strain>PCC 7120 / SAG 25.82 / UTEX 2576</strain>
    </source>
</reference>
<name>KGUA_NOSS1</name>
<keyword id="KW-0067">ATP-binding</keyword>
<keyword id="KW-0963">Cytoplasm</keyword>
<keyword id="KW-0418">Kinase</keyword>
<keyword id="KW-0547">Nucleotide-binding</keyword>
<keyword id="KW-1185">Reference proteome</keyword>
<keyword id="KW-0808">Transferase</keyword>
<protein>
    <recommendedName>
        <fullName evidence="1">Guanylate kinase</fullName>
        <ecNumber evidence="1">2.7.4.8</ecNumber>
    </recommendedName>
    <alternativeName>
        <fullName evidence="1">GMP kinase</fullName>
    </alternativeName>
</protein>
<organism>
    <name type="scientific">Nostoc sp. (strain PCC 7120 / SAG 25.82 / UTEX 2576)</name>
    <dbReference type="NCBI Taxonomy" id="103690"/>
    <lineage>
        <taxon>Bacteria</taxon>
        <taxon>Bacillati</taxon>
        <taxon>Cyanobacteriota</taxon>
        <taxon>Cyanophyceae</taxon>
        <taxon>Nostocales</taxon>
        <taxon>Nostocaceae</taxon>
        <taxon>Nostoc</taxon>
    </lineage>
</organism>
<accession>Q8Z0I7</accession>
<feature type="chain" id="PRO_0000170489" description="Guanylate kinase">
    <location>
        <begin position="1"/>
        <end position="199"/>
    </location>
</feature>
<feature type="domain" description="Guanylate kinase-like" evidence="1">
    <location>
        <begin position="20"/>
        <end position="198"/>
    </location>
</feature>
<feature type="binding site" evidence="1">
    <location>
        <begin position="27"/>
        <end position="34"/>
    </location>
    <ligand>
        <name>ATP</name>
        <dbReference type="ChEBI" id="CHEBI:30616"/>
    </ligand>
</feature>
<evidence type="ECO:0000255" key="1">
    <source>
        <dbReference type="HAMAP-Rule" id="MF_00328"/>
    </source>
</evidence>
<dbReference type="EC" id="2.7.4.8" evidence="1"/>
<dbReference type="EMBL" id="BA000019">
    <property type="protein sequence ID" value="BAB77630.1"/>
    <property type="molecule type" value="Genomic_DNA"/>
</dbReference>
<dbReference type="PIR" id="AB1820">
    <property type="entry name" value="AB1820"/>
</dbReference>
<dbReference type="RefSeq" id="WP_010994283.1">
    <property type="nucleotide sequence ID" value="NZ_RSCN01000016.1"/>
</dbReference>
<dbReference type="SMR" id="Q8Z0I7"/>
<dbReference type="STRING" id="103690.gene:10492110"/>
<dbReference type="KEGG" id="ana:alr0106"/>
<dbReference type="eggNOG" id="COG0194">
    <property type="taxonomic scope" value="Bacteria"/>
</dbReference>
<dbReference type="OrthoDB" id="9808150at2"/>
<dbReference type="Proteomes" id="UP000002483">
    <property type="component" value="Chromosome"/>
</dbReference>
<dbReference type="GO" id="GO:0005829">
    <property type="term" value="C:cytosol"/>
    <property type="evidence" value="ECO:0007669"/>
    <property type="project" value="TreeGrafter"/>
</dbReference>
<dbReference type="GO" id="GO:0005524">
    <property type="term" value="F:ATP binding"/>
    <property type="evidence" value="ECO:0007669"/>
    <property type="project" value="UniProtKB-UniRule"/>
</dbReference>
<dbReference type="GO" id="GO:0004385">
    <property type="term" value="F:guanylate kinase activity"/>
    <property type="evidence" value="ECO:0007669"/>
    <property type="project" value="UniProtKB-UniRule"/>
</dbReference>
<dbReference type="CDD" id="cd00071">
    <property type="entry name" value="GMPK"/>
    <property type="match status" value="1"/>
</dbReference>
<dbReference type="FunFam" id="3.30.63.10:FF:000002">
    <property type="entry name" value="Guanylate kinase 1"/>
    <property type="match status" value="1"/>
</dbReference>
<dbReference type="Gene3D" id="3.30.63.10">
    <property type="entry name" value="Guanylate Kinase phosphate binding domain"/>
    <property type="match status" value="1"/>
</dbReference>
<dbReference type="Gene3D" id="3.40.50.300">
    <property type="entry name" value="P-loop containing nucleotide triphosphate hydrolases"/>
    <property type="match status" value="1"/>
</dbReference>
<dbReference type="HAMAP" id="MF_00328">
    <property type="entry name" value="Guanylate_kinase"/>
    <property type="match status" value="1"/>
</dbReference>
<dbReference type="InterPro" id="IPR008145">
    <property type="entry name" value="GK/Ca_channel_bsu"/>
</dbReference>
<dbReference type="InterPro" id="IPR008144">
    <property type="entry name" value="Guanylate_kin-like_dom"/>
</dbReference>
<dbReference type="InterPro" id="IPR017665">
    <property type="entry name" value="Guanylate_kinase"/>
</dbReference>
<dbReference type="InterPro" id="IPR020590">
    <property type="entry name" value="Guanylate_kinase_CS"/>
</dbReference>
<dbReference type="InterPro" id="IPR027417">
    <property type="entry name" value="P-loop_NTPase"/>
</dbReference>
<dbReference type="NCBIfam" id="TIGR03263">
    <property type="entry name" value="guanyl_kin"/>
    <property type="match status" value="1"/>
</dbReference>
<dbReference type="PANTHER" id="PTHR23117:SF13">
    <property type="entry name" value="GUANYLATE KINASE"/>
    <property type="match status" value="1"/>
</dbReference>
<dbReference type="PANTHER" id="PTHR23117">
    <property type="entry name" value="GUANYLATE KINASE-RELATED"/>
    <property type="match status" value="1"/>
</dbReference>
<dbReference type="Pfam" id="PF00625">
    <property type="entry name" value="Guanylate_kin"/>
    <property type="match status" value="1"/>
</dbReference>
<dbReference type="SMART" id="SM00072">
    <property type="entry name" value="GuKc"/>
    <property type="match status" value="1"/>
</dbReference>
<dbReference type="SUPFAM" id="SSF52540">
    <property type="entry name" value="P-loop containing nucleoside triphosphate hydrolases"/>
    <property type="match status" value="1"/>
</dbReference>
<dbReference type="PROSITE" id="PS00856">
    <property type="entry name" value="GUANYLATE_KINASE_1"/>
    <property type="match status" value="1"/>
</dbReference>
<dbReference type="PROSITE" id="PS50052">
    <property type="entry name" value="GUANYLATE_KINASE_2"/>
    <property type="match status" value="1"/>
</dbReference>
<gene>
    <name evidence="1" type="primary">gmk</name>
    <name type="ordered locus">alr0106</name>
</gene>